<protein>
    <recommendedName>
        <fullName>Oxygen-evolving enhancer protein 3-2, chloroplastic</fullName>
        <shortName>OEE3</shortName>
    </recommendedName>
    <alternativeName>
        <fullName>16 kDa subunit of oxygen evolving system of photosystem II</fullName>
    </alternativeName>
    <alternativeName>
        <fullName>OEC 16 kDa subunit</fullName>
    </alternativeName>
</protein>
<keyword id="KW-0150">Chloroplast</keyword>
<keyword id="KW-0903">Direct protein sequencing</keyword>
<keyword id="KW-0472">Membrane</keyword>
<keyword id="KW-0597">Phosphoprotein</keyword>
<keyword id="KW-0602">Photosynthesis</keyword>
<keyword id="KW-0604">Photosystem II</keyword>
<keyword id="KW-0934">Plastid</keyword>
<keyword id="KW-1185">Reference proteome</keyword>
<keyword id="KW-0793">Thylakoid</keyword>
<keyword id="KW-0809">Transit peptide</keyword>
<accession>Q41932</accession>
<accession>Q9M0X7</accession>
<reference key="1">
    <citation type="journal article" date="1999" name="Nature">
        <title>Sequence and analysis of chromosome 4 of the plant Arabidopsis thaliana.</title>
        <authorList>
            <person name="Mayer K.F.X."/>
            <person name="Schueller C."/>
            <person name="Wambutt R."/>
            <person name="Murphy G."/>
            <person name="Volckaert G."/>
            <person name="Pohl T."/>
            <person name="Duesterhoeft A."/>
            <person name="Stiekema W."/>
            <person name="Entian K.-D."/>
            <person name="Terryn N."/>
            <person name="Harris B."/>
            <person name="Ansorge W."/>
            <person name="Brandt P."/>
            <person name="Grivell L.A."/>
            <person name="Rieger M."/>
            <person name="Weichselgartner M."/>
            <person name="de Simone V."/>
            <person name="Obermaier B."/>
            <person name="Mache R."/>
            <person name="Mueller M."/>
            <person name="Kreis M."/>
            <person name="Delseny M."/>
            <person name="Puigdomenech P."/>
            <person name="Watson M."/>
            <person name="Schmidtheini T."/>
            <person name="Reichert B."/>
            <person name="Portetelle D."/>
            <person name="Perez-Alonso M."/>
            <person name="Boutry M."/>
            <person name="Bancroft I."/>
            <person name="Vos P."/>
            <person name="Hoheisel J."/>
            <person name="Zimmermann W."/>
            <person name="Wedler H."/>
            <person name="Ridley P."/>
            <person name="Langham S.-A."/>
            <person name="McCullagh B."/>
            <person name="Bilham L."/>
            <person name="Robben J."/>
            <person name="van der Schueren J."/>
            <person name="Grymonprez B."/>
            <person name="Chuang Y.-J."/>
            <person name="Vandenbussche F."/>
            <person name="Braeken M."/>
            <person name="Weltjens I."/>
            <person name="Voet M."/>
            <person name="Bastiaens I."/>
            <person name="Aert R."/>
            <person name="Defoor E."/>
            <person name="Weitzenegger T."/>
            <person name="Bothe G."/>
            <person name="Ramsperger U."/>
            <person name="Hilbert H."/>
            <person name="Braun M."/>
            <person name="Holzer E."/>
            <person name="Brandt A."/>
            <person name="Peters S."/>
            <person name="van Staveren M."/>
            <person name="Dirkse W."/>
            <person name="Mooijman P."/>
            <person name="Klein Lankhorst R."/>
            <person name="Rose M."/>
            <person name="Hauf J."/>
            <person name="Koetter P."/>
            <person name="Berneiser S."/>
            <person name="Hempel S."/>
            <person name="Feldpausch M."/>
            <person name="Lamberth S."/>
            <person name="Van den Daele H."/>
            <person name="De Keyser A."/>
            <person name="Buysshaert C."/>
            <person name="Gielen J."/>
            <person name="Villarroel R."/>
            <person name="De Clercq R."/>
            <person name="van Montagu M."/>
            <person name="Rogers J."/>
            <person name="Cronin A."/>
            <person name="Quail M.A."/>
            <person name="Bray-Allen S."/>
            <person name="Clark L."/>
            <person name="Doggett J."/>
            <person name="Hall S."/>
            <person name="Kay M."/>
            <person name="Lennard N."/>
            <person name="McLay K."/>
            <person name="Mayes R."/>
            <person name="Pettett A."/>
            <person name="Rajandream M.A."/>
            <person name="Lyne M."/>
            <person name="Benes V."/>
            <person name="Rechmann S."/>
            <person name="Borkova D."/>
            <person name="Bloecker H."/>
            <person name="Scharfe M."/>
            <person name="Grimm M."/>
            <person name="Loehnert T.-H."/>
            <person name="Dose S."/>
            <person name="de Haan M."/>
            <person name="Maarse A.C."/>
            <person name="Schaefer M."/>
            <person name="Mueller-Auer S."/>
            <person name="Gabel C."/>
            <person name="Fuchs M."/>
            <person name="Fartmann B."/>
            <person name="Granderath K."/>
            <person name="Dauner D."/>
            <person name="Herzl A."/>
            <person name="Neumann S."/>
            <person name="Argiriou A."/>
            <person name="Vitale D."/>
            <person name="Liguori R."/>
            <person name="Piravandi E."/>
            <person name="Massenet O."/>
            <person name="Quigley F."/>
            <person name="Clabauld G."/>
            <person name="Muendlein A."/>
            <person name="Felber R."/>
            <person name="Schnabl S."/>
            <person name="Hiller R."/>
            <person name="Schmidt W."/>
            <person name="Lecharny A."/>
            <person name="Aubourg S."/>
            <person name="Chefdor F."/>
            <person name="Cooke R."/>
            <person name="Berger C."/>
            <person name="Monfort A."/>
            <person name="Casacuberta E."/>
            <person name="Gibbons T."/>
            <person name="Weber N."/>
            <person name="Vandenbol M."/>
            <person name="Bargues M."/>
            <person name="Terol J."/>
            <person name="Torres A."/>
            <person name="Perez-Perez A."/>
            <person name="Purnelle B."/>
            <person name="Bent E."/>
            <person name="Johnson S."/>
            <person name="Tacon D."/>
            <person name="Jesse T."/>
            <person name="Heijnen L."/>
            <person name="Schwarz S."/>
            <person name="Scholler P."/>
            <person name="Heber S."/>
            <person name="Francs P."/>
            <person name="Bielke C."/>
            <person name="Frishman D."/>
            <person name="Haase D."/>
            <person name="Lemcke K."/>
            <person name="Mewes H.-W."/>
            <person name="Stocker S."/>
            <person name="Zaccaria P."/>
            <person name="Bevan M."/>
            <person name="Wilson R.K."/>
            <person name="de la Bastide M."/>
            <person name="Habermann K."/>
            <person name="Parnell L."/>
            <person name="Dedhia N."/>
            <person name="Gnoj L."/>
            <person name="Schutz K."/>
            <person name="Huang E."/>
            <person name="Spiegel L."/>
            <person name="Sekhon M."/>
            <person name="Murray J."/>
            <person name="Sheet P."/>
            <person name="Cordes M."/>
            <person name="Abu-Threideh J."/>
            <person name="Stoneking T."/>
            <person name="Kalicki J."/>
            <person name="Graves T."/>
            <person name="Harmon G."/>
            <person name="Edwards J."/>
            <person name="Latreille P."/>
            <person name="Courtney L."/>
            <person name="Cloud J."/>
            <person name="Abbott A."/>
            <person name="Scott K."/>
            <person name="Johnson D."/>
            <person name="Minx P."/>
            <person name="Bentley D."/>
            <person name="Fulton B."/>
            <person name="Miller N."/>
            <person name="Greco T."/>
            <person name="Kemp K."/>
            <person name="Kramer J."/>
            <person name="Fulton L."/>
            <person name="Mardis E."/>
            <person name="Dante M."/>
            <person name="Pepin K."/>
            <person name="Hillier L.W."/>
            <person name="Nelson J."/>
            <person name="Spieth J."/>
            <person name="Ryan E."/>
            <person name="Andrews S."/>
            <person name="Geisel C."/>
            <person name="Layman D."/>
            <person name="Du H."/>
            <person name="Ali J."/>
            <person name="Berghoff A."/>
            <person name="Jones K."/>
            <person name="Drone K."/>
            <person name="Cotton M."/>
            <person name="Joshu C."/>
            <person name="Antonoiu B."/>
            <person name="Zidanic M."/>
            <person name="Strong C."/>
            <person name="Sun H."/>
            <person name="Lamar B."/>
            <person name="Yordan C."/>
            <person name="Ma P."/>
            <person name="Zhong J."/>
            <person name="Preston R."/>
            <person name="Vil D."/>
            <person name="Shekher M."/>
            <person name="Matero A."/>
            <person name="Shah R."/>
            <person name="Swaby I.K."/>
            <person name="O'Shaughnessy A."/>
            <person name="Rodriguez M."/>
            <person name="Hoffman J."/>
            <person name="Till S."/>
            <person name="Granat S."/>
            <person name="Shohdy N."/>
            <person name="Hasegawa A."/>
            <person name="Hameed A."/>
            <person name="Lodhi M."/>
            <person name="Johnson A."/>
            <person name="Chen E."/>
            <person name="Marra M.A."/>
            <person name="Martienssen R."/>
            <person name="McCombie W.R."/>
        </authorList>
    </citation>
    <scope>NUCLEOTIDE SEQUENCE [LARGE SCALE GENOMIC DNA]</scope>
    <source>
        <strain>cv. Columbia</strain>
    </source>
</reference>
<reference key="2">
    <citation type="journal article" date="2017" name="Plant J.">
        <title>Araport11: a complete reannotation of the Arabidopsis thaliana reference genome.</title>
        <authorList>
            <person name="Cheng C.Y."/>
            <person name="Krishnakumar V."/>
            <person name="Chan A.P."/>
            <person name="Thibaud-Nissen F."/>
            <person name="Schobel S."/>
            <person name="Town C.D."/>
        </authorList>
    </citation>
    <scope>GENOME REANNOTATION</scope>
    <source>
        <strain>cv. Columbia</strain>
    </source>
</reference>
<reference key="3">
    <citation type="journal article" date="2003" name="Science">
        <title>Empirical analysis of transcriptional activity in the Arabidopsis genome.</title>
        <authorList>
            <person name="Yamada K."/>
            <person name="Lim J."/>
            <person name="Dale J.M."/>
            <person name="Chen H."/>
            <person name="Shinn P."/>
            <person name="Palm C.J."/>
            <person name="Southwick A.M."/>
            <person name="Wu H.C."/>
            <person name="Kim C.J."/>
            <person name="Nguyen M."/>
            <person name="Pham P.K."/>
            <person name="Cheuk R.F."/>
            <person name="Karlin-Newmann G."/>
            <person name="Liu S.X."/>
            <person name="Lam B."/>
            <person name="Sakano H."/>
            <person name="Wu T."/>
            <person name="Yu G."/>
            <person name="Miranda M."/>
            <person name="Quach H.L."/>
            <person name="Tripp M."/>
            <person name="Chang C.H."/>
            <person name="Lee J.M."/>
            <person name="Toriumi M.J."/>
            <person name="Chan M.M."/>
            <person name="Tang C.C."/>
            <person name="Onodera C.S."/>
            <person name="Deng J.M."/>
            <person name="Akiyama K."/>
            <person name="Ansari Y."/>
            <person name="Arakawa T."/>
            <person name="Banh J."/>
            <person name="Banno F."/>
            <person name="Bowser L."/>
            <person name="Brooks S.Y."/>
            <person name="Carninci P."/>
            <person name="Chao Q."/>
            <person name="Choy N."/>
            <person name="Enju A."/>
            <person name="Goldsmith A.D."/>
            <person name="Gurjal M."/>
            <person name="Hansen N.F."/>
            <person name="Hayashizaki Y."/>
            <person name="Johnson-Hopson C."/>
            <person name="Hsuan V.W."/>
            <person name="Iida K."/>
            <person name="Karnes M."/>
            <person name="Khan S."/>
            <person name="Koesema E."/>
            <person name="Ishida J."/>
            <person name="Jiang P.X."/>
            <person name="Jones T."/>
            <person name="Kawai J."/>
            <person name="Kamiya A."/>
            <person name="Meyers C."/>
            <person name="Nakajima M."/>
            <person name="Narusaka M."/>
            <person name="Seki M."/>
            <person name="Sakurai T."/>
            <person name="Satou M."/>
            <person name="Tamse R."/>
            <person name="Vaysberg M."/>
            <person name="Wallender E.K."/>
            <person name="Wong C."/>
            <person name="Yamamura Y."/>
            <person name="Yuan S."/>
            <person name="Shinozaki K."/>
            <person name="Davis R.W."/>
            <person name="Theologis A."/>
            <person name="Ecker J.R."/>
        </authorList>
    </citation>
    <scope>NUCLEOTIDE SEQUENCE [LARGE SCALE MRNA]</scope>
    <source>
        <strain>cv. Columbia</strain>
    </source>
</reference>
<reference key="4">
    <citation type="submission" date="2002-03" db="EMBL/GenBank/DDBJ databases">
        <title>Full-length cDNA from Arabidopsis thaliana.</title>
        <authorList>
            <person name="Brover V.V."/>
            <person name="Troukhan M.E."/>
            <person name="Alexandrov N.A."/>
            <person name="Lu Y.-P."/>
            <person name="Flavell R.B."/>
            <person name="Feldmann K.A."/>
        </authorList>
    </citation>
    <scope>NUCLEOTIDE SEQUENCE [LARGE SCALE MRNA]</scope>
</reference>
<reference key="5">
    <citation type="journal article" date="1993" name="Plant J.">
        <title>An inventory of 1152 expressed sequence tags obtained by partial sequencing of cDNAs from Arabidopsis thaliana.</title>
        <authorList>
            <person name="Hoefte H."/>
            <person name="Desprez T."/>
            <person name="Amselem J."/>
            <person name="Chiapello H."/>
            <person name="Rouze P."/>
            <person name="Caboche M."/>
            <person name="Moisan A."/>
            <person name="Jourjon M.-F."/>
            <person name="Charpenteau J.-L."/>
            <person name="Berthomieu P."/>
            <person name="Guerrier D."/>
            <person name="Giraudat J."/>
            <person name="Quigley F."/>
            <person name="Thomas F."/>
            <person name="Yu D.-Y."/>
            <person name="Mache R."/>
            <person name="Raynal M."/>
            <person name="Cooke R."/>
            <person name="Grellet F."/>
            <person name="Delseny M."/>
            <person name="Parmentier Y."/>
            <person name="de Marcillac G."/>
            <person name="Gigot C."/>
            <person name="Fleck J."/>
            <person name="Philipps G."/>
            <person name="Axelos M."/>
            <person name="Bardet C."/>
            <person name="Tremousaygue D."/>
            <person name="Lescure B."/>
        </authorList>
    </citation>
    <scope>NUCLEOTIDE SEQUENCE [LARGE SCALE MRNA] OF 166-230</scope>
    <source>
        <strain>cv. Columbia</strain>
        <tissue>Green siliques</tissue>
    </source>
</reference>
<reference key="6">
    <citation type="journal article" date="2013" name="Anal. Biochem.">
        <title>Experimental determination of organelle targeting-peptide cleavage sites using transient expression of green fluorescent protein translational fusions.</title>
        <authorList>
            <person name="Candat A."/>
            <person name="Poupart P."/>
            <person name="Andrieu J.P."/>
            <person name="Chevrollier A."/>
            <person name="Reynier P."/>
            <person name="Rogniaux H."/>
            <person name="Avelange-Macherel M.H."/>
            <person name="Macherel D."/>
        </authorList>
    </citation>
    <scope>PROTEIN SEQUENCE OF 50-57</scope>
    <scope>TRANSIT PEPTIDE</scope>
</reference>
<reference key="7">
    <citation type="journal article" date="2002" name="J. Biol. Chem.">
        <title>Proteome map of the chloroplast lumen of Arabidopsis thaliana.</title>
        <authorList>
            <person name="Schubert M."/>
            <person name="Petersson U.A."/>
            <person name="Haas B.J."/>
            <person name="Funk C."/>
            <person name="Schroeder W.P."/>
            <person name="Kieselbach T."/>
        </authorList>
    </citation>
    <scope>PROTEIN SEQUENCE OF 83-96</scope>
    <scope>SUBCELLULAR LOCATION</scope>
</reference>
<reference key="8">
    <citation type="journal article" date="2002" name="Plant Cell">
        <title>Central functions of the lumenal and peripheral thylakoid proteome of Arabidopsis determined by experimentation and genome-wide prediction.</title>
        <authorList>
            <person name="Peltier J.-B."/>
            <person name="Emanuelsson O."/>
            <person name="Kalume D.E."/>
            <person name="Ytterberg J."/>
            <person name="Friso G."/>
            <person name="Rudella A."/>
            <person name="Liberles D.A."/>
            <person name="Soederberg L."/>
            <person name="Roepstorff P."/>
            <person name="von Heijne G."/>
            <person name="van Wijk K.J."/>
        </authorList>
    </citation>
    <scope>PROTEIN SEQUENCE OF N-TERMINUS</scope>
    <scope>IDENTIFICATION BY MASS SPECTROMETRY</scope>
</reference>
<reference key="9">
    <citation type="journal article" date="2006" name="J. Biol. Chem.">
        <title>The PsbQ protein is required in Arabidopsis for photosystem II assembly/stability and photoautotrophy under low light conditions.</title>
        <authorList>
            <person name="Yi X."/>
            <person name="Hargett S.R."/>
            <person name="Frankel L.K."/>
            <person name="Bricker T.M."/>
        </authorList>
    </citation>
    <scope>FUNCTION</scope>
</reference>
<reference key="10">
    <citation type="journal article" date="2008" name="PLoS ONE">
        <title>Sorting signals, N-terminal modifications and abundance of the chloroplast proteome.</title>
        <authorList>
            <person name="Zybailov B."/>
            <person name="Rutschow H."/>
            <person name="Friso G."/>
            <person name="Rudella A."/>
            <person name="Emanuelsson O."/>
            <person name="Sun Q."/>
            <person name="van Wijk K.J."/>
        </authorList>
    </citation>
    <scope>IDENTIFICATION BY MASS SPECTROMETRY</scope>
    <scope>SUBCELLULAR LOCATION [LARGE SCALE ANALYSIS]</scope>
</reference>
<reference key="11">
    <citation type="journal article" date="2009" name="Plant Physiol.">
        <title>Large-scale Arabidopsis phosphoproteome profiling reveals novel chloroplast kinase substrates and phosphorylation networks.</title>
        <authorList>
            <person name="Reiland S."/>
            <person name="Messerli G."/>
            <person name="Baerenfaller K."/>
            <person name="Gerrits B."/>
            <person name="Endler A."/>
            <person name="Grossmann J."/>
            <person name="Gruissem W."/>
            <person name="Baginsky S."/>
        </authorList>
    </citation>
    <scope>PHOSPHORYLATION [LARGE SCALE ANALYSIS] AT SER-125</scope>
    <scope>IDENTIFICATION BY MASS SPECTROMETRY [LARGE SCALE ANALYSIS]</scope>
</reference>
<reference key="12">
    <citation type="journal article" date="2012" name="J. Proteome Res.">
        <title>Identification of phosphoproteins in Arabidopsis thaliana leaves using polyethylene glycol fractionation, immobilized metal-ion affinity chromatography, two-dimensional gel electrophoresis and mass spectrometry.</title>
        <authorList>
            <person name="Aryal U.K."/>
            <person name="Krochko J.E."/>
            <person name="Ross A.R."/>
        </authorList>
    </citation>
    <scope>PHOSPHORYLATION [LARGE SCALE ANALYSIS] AT SER-216</scope>
    <scope>IDENTIFICATION BY MASS SPECTROMETRY [LARGE SCALE ANALYSIS]</scope>
</reference>
<organism>
    <name type="scientific">Arabidopsis thaliana</name>
    <name type="common">Mouse-ear cress</name>
    <dbReference type="NCBI Taxonomy" id="3702"/>
    <lineage>
        <taxon>Eukaryota</taxon>
        <taxon>Viridiplantae</taxon>
        <taxon>Streptophyta</taxon>
        <taxon>Embryophyta</taxon>
        <taxon>Tracheophyta</taxon>
        <taxon>Spermatophyta</taxon>
        <taxon>Magnoliopsida</taxon>
        <taxon>eudicotyledons</taxon>
        <taxon>Gunneridae</taxon>
        <taxon>Pentapetalae</taxon>
        <taxon>rosids</taxon>
        <taxon>malvids</taxon>
        <taxon>Brassicales</taxon>
        <taxon>Brassicaceae</taxon>
        <taxon>Camelineae</taxon>
        <taxon>Arabidopsis</taxon>
    </lineage>
</organism>
<gene>
    <name type="primary">PSBQ2</name>
    <name type="synonym">PSBQB</name>
    <name type="ordered locus">At4g05180</name>
    <name type="ORF">C17L7.100</name>
</gene>
<name>PSBQ2_ARATH</name>
<comment type="function">
    <text evidence="3">Required for photosystem II assembly/stability and photoautotrophic growth under low light conditions.</text>
</comment>
<comment type="subcellular location">
    <subcellularLocation>
        <location evidence="2 4">Plastid</location>
        <location evidence="2 4">Chloroplast thylakoid membrane</location>
        <topology evidence="2">Peripheral membrane protein</topology>
        <orientation evidence="2">Lumenal side</orientation>
    </subcellularLocation>
    <text>Associated with the photosystem II complex.</text>
</comment>
<comment type="similarity">
    <text evidence="5">Belongs to the PsbQ family.</text>
</comment>
<evidence type="ECO:0000250" key="1">
    <source>
        <dbReference type="UniProtKB" id="Q9XFT3"/>
    </source>
</evidence>
<evidence type="ECO:0000269" key="2">
    <source>
    </source>
</evidence>
<evidence type="ECO:0000269" key="3">
    <source>
    </source>
</evidence>
<evidence type="ECO:0000269" key="4">
    <source>
    </source>
</evidence>
<evidence type="ECO:0000305" key="5"/>
<evidence type="ECO:0007744" key="6">
    <source>
    </source>
</evidence>
<evidence type="ECO:0007744" key="7">
    <source>
    </source>
</evidence>
<proteinExistence type="evidence at protein level"/>
<sequence length="230" mass="24643">MAQAVTSMAGLRGASQAVLEGSLQINGSNRLNISRVSVGSQRTGLVIRAQQNVSVPESSRRSVIGLVAAGLAGGSFVKAVFAEAIPIKVGGPPLPSGGLPGTDNSDQARDFSLALKDRFYIQPLSPTEAAARAKDSAKEIINVKSFIDKKAWPYVQNDLRLRASYLRYDLNTVISAKPKEEKQSLKDLTAKLFQTIDNLDYAARSKSSPDAEKYYSETVSSLNNVLAKLG</sequence>
<feature type="transit peptide" description="Chloroplast">
    <location>
        <begin position="1"/>
        <end position="49"/>
    </location>
</feature>
<feature type="transit peptide" description="Thylakoid">
    <location>
        <begin position="50"/>
        <end position="82"/>
    </location>
</feature>
<feature type="chain" id="PRO_0000029590" description="Oxygen-evolving enhancer protein 3-2, chloroplastic">
    <location>
        <begin position="83"/>
        <end position="230"/>
    </location>
</feature>
<feature type="modified residue" description="Phosphoserine" evidence="6">
    <location>
        <position position="125"/>
    </location>
</feature>
<feature type="modified residue" description="Phosphothreonine" evidence="1">
    <location>
        <position position="195"/>
    </location>
</feature>
<feature type="modified residue" description="Phosphotyrosine" evidence="1">
    <location>
        <position position="215"/>
    </location>
</feature>
<feature type="modified residue" description="Phosphoserine" evidence="7">
    <location>
        <position position="216"/>
    </location>
</feature>
<feature type="modified residue" description="Phosphothreonine" evidence="1">
    <location>
        <position position="218"/>
    </location>
</feature>
<feature type="sequence conflict" description="In Ref. 5; CAA79064." evidence="5" ref="5">
    <original>A</original>
    <variation>T</variation>
    <location>
        <position position="190"/>
    </location>
</feature>
<dbReference type="EMBL" id="AL161503">
    <property type="protein sequence ID" value="CAB81060.1"/>
    <property type="molecule type" value="Genomic_DNA"/>
</dbReference>
<dbReference type="EMBL" id="CP002687">
    <property type="protein sequence ID" value="AEE82488.1"/>
    <property type="molecule type" value="Genomic_DNA"/>
</dbReference>
<dbReference type="EMBL" id="CP002687">
    <property type="protein sequence ID" value="ANM66257.1"/>
    <property type="molecule type" value="Genomic_DNA"/>
</dbReference>
<dbReference type="EMBL" id="AF372897">
    <property type="protein sequence ID" value="AAK49613.1"/>
    <property type="molecule type" value="mRNA"/>
</dbReference>
<dbReference type="EMBL" id="BT000648">
    <property type="protein sequence ID" value="AAN18214.1"/>
    <property type="molecule type" value="mRNA"/>
</dbReference>
<dbReference type="EMBL" id="AY088008">
    <property type="protein sequence ID" value="AAM65554.1"/>
    <property type="molecule type" value="mRNA"/>
</dbReference>
<dbReference type="EMBL" id="Z17777">
    <property type="protein sequence ID" value="CAA79064.1"/>
    <property type="molecule type" value="mRNA"/>
</dbReference>
<dbReference type="PIR" id="B85065">
    <property type="entry name" value="B85065"/>
</dbReference>
<dbReference type="RefSeq" id="NP_001319873.1">
    <property type="nucleotide sequence ID" value="NM_001340541.1"/>
</dbReference>
<dbReference type="RefSeq" id="NP_192427.1">
    <property type="nucleotide sequence ID" value="NM_116757.4"/>
</dbReference>
<dbReference type="SMR" id="Q41932"/>
<dbReference type="BioGRID" id="11177">
    <property type="interactions" value="7"/>
</dbReference>
<dbReference type="FunCoup" id="Q41932">
    <property type="interactions" value="1172"/>
</dbReference>
<dbReference type="IntAct" id="Q41932">
    <property type="interactions" value="2"/>
</dbReference>
<dbReference type="MINT" id="Q41932"/>
<dbReference type="STRING" id="3702.Q41932"/>
<dbReference type="iPTMnet" id="Q41932"/>
<dbReference type="PaxDb" id="3702-AT4G05180.1"/>
<dbReference type="ProteomicsDB" id="226099"/>
<dbReference type="EnsemblPlants" id="AT4G05180.1">
    <property type="protein sequence ID" value="AT4G05180.1"/>
    <property type="gene ID" value="AT4G05180"/>
</dbReference>
<dbReference type="EnsemblPlants" id="AT4G05180.2">
    <property type="protein sequence ID" value="AT4G05180.2"/>
    <property type="gene ID" value="AT4G05180"/>
</dbReference>
<dbReference type="GeneID" id="825866"/>
<dbReference type="Gramene" id="AT4G05180.1">
    <property type="protein sequence ID" value="AT4G05180.1"/>
    <property type="gene ID" value="AT4G05180"/>
</dbReference>
<dbReference type="Gramene" id="AT4G05180.2">
    <property type="protein sequence ID" value="AT4G05180.2"/>
    <property type="gene ID" value="AT4G05180"/>
</dbReference>
<dbReference type="KEGG" id="ath:AT4G05180"/>
<dbReference type="Araport" id="AT4G05180"/>
<dbReference type="TAIR" id="AT4G05180">
    <property type="gene designation" value="PSBQ-2"/>
</dbReference>
<dbReference type="eggNOG" id="ENOG502QQF9">
    <property type="taxonomic scope" value="Eukaryota"/>
</dbReference>
<dbReference type="HOGENOM" id="CLU_085524_0_0_1"/>
<dbReference type="InParanoid" id="Q41932"/>
<dbReference type="OMA" id="YWTEARE"/>
<dbReference type="OrthoDB" id="497707at2759"/>
<dbReference type="PhylomeDB" id="Q41932"/>
<dbReference type="BioCyc" id="ARA:AT4G05180-MONOMER"/>
<dbReference type="PRO" id="PR:Q41932"/>
<dbReference type="Proteomes" id="UP000006548">
    <property type="component" value="Chromosome 4"/>
</dbReference>
<dbReference type="ExpressionAtlas" id="Q41932">
    <property type="expression patterns" value="baseline and differential"/>
</dbReference>
<dbReference type="GO" id="GO:0048046">
    <property type="term" value="C:apoplast"/>
    <property type="evidence" value="ECO:0007005"/>
    <property type="project" value="TAIR"/>
</dbReference>
<dbReference type="GO" id="GO:0009507">
    <property type="term" value="C:chloroplast"/>
    <property type="evidence" value="ECO:0007005"/>
    <property type="project" value="TAIR"/>
</dbReference>
<dbReference type="GO" id="GO:0009570">
    <property type="term" value="C:chloroplast stroma"/>
    <property type="evidence" value="ECO:0007005"/>
    <property type="project" value="TAIR"/>
</dbReference>
<dbReference type="GO" id="GO:0009534">
    <property type="term" value="C:chloroplast thylakoid"/>
    <property type="evidence" value="ECO:0007005"/>
    <property type="project" value="TAIR"/>
</dbReference>
<dbReference type="GO" id="GO:0009535">
    <property type="term" value="C:chloroplast thylakoid membrane"/>
    <property type="evidence" value="ECO:0007005"/>
    <property type="project" value="TAIR"/>
</dbReference>
<dbReference type="GO" id="GO:0005829">
    <property type="term" value="C:cytosol"/>
    <property type="evidence" value="ECO:0007005"/>
    <property type="project" value="TAIR"/>
</dbReference>
<dbReference type="GO" id="GO:0019898">
    <property type="term" value="C:extrinsic component of membrane"/>
    <property type="evidence" value="ECO:0007669"/>
    <property type="project" value="InterPro"/>
</dbReference>
<dbReference type="GO" id="GO:0009654">
    <property type="term" value="C:photosystem II oxygen evolving complex"/>
    <property type="evidence" value="ECO:0007669"/>
    <property type="project" value="InterPro"/>
</dbReference>
<dbReference type="GO" id="GO:0009579">
    <property type="term" value="C:thylakoid"/>
    <property type="evidence" value="ECO:0007005"/>
    <property type="project" value="TAIR"/>
</dbReference>
<dbReference type="GO" id="GO:0031977">
    <property type="term" value="C:thylakoid lumen"/>
    <property type="evidence" value="ECO:0007005"/>
    <property type="project" value="TAIR"/>
</dbReference>
<dbReference type="GO" id="GO:0005509">
    <property type="term" value="F:calcium ion binding"/>
    <property type="evidence" value="ECO:0007669"/>
    <property type="project" value="InterPro"/>
</dbReference>
<dbReference type="GO" id="GO:0015979">
    <property type="term" value="P:photosynthesis"/>
    <property type="evidence" value="ECO:0007669"/>
    <property type="project" value="UniProtKB-KW"/>
</dbReference>
<dbReference type="FunFam" id="1.20.120.290:FF:000001">
    <property type="entry name" value="Oxygen-evolving enhancer protein 3"/>
    <property type="match status" value="1"/>
</dbReference>
<dbReference type="Gene3D" id="1.20.120.290">
    <property type="entry name" value="Oxygen-evolving enhancer protein 3 (PsbQ), four-helix up-down bundle"/>
    <property type="match status" value="1"/>
</dbReference>
<dbReference type="InterPro" id="IPR023222">
    <property type="entry name" value="PsbQ-like_dom_sf"/>
</dbReference>
<dbReference type="InterPro" id="IPR008797">
    <property type="entry name" value="PSII_PsbQ"/>
</dbReference>
<dbReference type="InterPro" id="IPR054099">
    <property type="entry name" value="PSII_PsbQ_pln"/>
</dbReference>
<dbReference type="PANTHER" id="PTHR33399">
    <property type="entry name" value="OXYGEN-EVOLVING ENHANCER PROTEIN 3-1, CHLOROPLASTIC"/>
    <property type="match status" value="1"/>
</dbReference>
<dbReference type="PANTHER" id="PTHR33399:SF7">
    <property type="entry name" value="OXYGEN-EVOLVING ENHANCER PROTEIN 3-2, CHLOROPLASTIC"/>
    <property type="match status" value="1"/>
</dbReference>
<dbReference type="Pfam" id="PF05757">
    <property type="entry name" value="PsbQ"/>
    <property type="match status" value="1"/>
</dbReference>
<dbReference type="SUPFAM" id="SSF101112">
    <property type="entry name" value="Oxygen-evolving enhancer protein 3"/>
    <property type="match status" value="1"/>
</dbReference>